<evidence type="ECO:0000250" key="1"/>
<evidence type="ECO:0000255" key="2"/>
<evidence type="ECO:0000255" key="3">
    <source>
        <dbReference type="PROSITE-ProRule" id="PRU00076"/>
    </source>
</evidence>
<evidence type="ECO:0000256" key="4">
    <source>
        <dbReference type="SAM" id="MobiDB-lite"/>
    </source>
</evidence>
<evidence type="ECO:0000269" key="5">
    <source>
    </source>
</evidence>
<evidence type="ECO:0000269" key="6">
    <source>
    </source>
</evidence>
<evidence type="ECO:0000303" key="7">
    <source>
    </source>
</evidence>
<evidence type="ECO:0000305" key="8"/>
<reference key="1">
    <citation type="journal article" date="2003" name="Curr. Biol.">
        <title>Heart of glass regulates the concentric growth of the heart in zebrafish.</title>
        <authorList>
            <person name="Mably J.D."/>
            <person name="Mohideen M.-A.P.K."/>
            <person name="Burns C.G."/>
            <person name="Chen J.-N."/>
            <person name="Fishman M.C."/>
        </authorList>
    </citation>
    <scope>NUCLEOTIDE SEQUENCE [MRNA] (ISOFORMS 1; 2 AND 3)</scope>
    <scope>FUNCTION</scope>
    <scope>DEVELOPMENTAL STAGE</scope>
    <scope>DISRUPTION PHENOTYPE</scope>
    <source>
        <tissue>Embryo</tissue>
    </source>
</reference>
<reference key="2">
    <citation type="journal article" date="2009" name="Nat. Med.">
        <title>Regulation of cardiovascular development and integrity by the heart of glass-cerebral cavernous malformation protein pathway.</title>
        <authorList>
            <person name="Kleaveland B."/>
            <person name="Zheng X."/>
            <person name="Liu J.J."/>
            <person name="Blum Y."/>
            <person name="Tung J.J."/>
            <person name="Zou Z."/>
            <person name="Sweeney S.M."/>
            <person name="Chen M."/>
            <person name="Guo L."/>
            <person name="Lu M.M."/>
            <person name="Zhou D."/>
            <person name="Kitajewski J."/>
            <person name="Affolter M."/>
            <person name="Ginsberg M.H."/>
            <person name="Kahn M.L."/>
        </authorList>
    </citation>
    <scope>FUNCTION</scope>
    <scope>INTERACTION WITH CCM2 AND KRIT1</scope>
</reference>
<name>HEG_DANRE</name>
<organism>
    <name type="scientific">Danio rerio</name>
    <name type="common">Zebrafish</name>
    <name type="synonym">Brachydanio rerio</name>
    <dbReference type="NCBI Taxonomy" id="7955"/>
    <lineage>
        <taxon>Eukaryota</taxon>
        <taxon>Metazoa</taxon>
        <taxon>Chordata</taxon>
        <taxon>Craniata</taxon>
        <taxon>Vertebrata</taxon>
        <taxon>Euteleostomi</taxon>
        <taxon>Actinopterygii</taxon>
        <taxon>Neopterygii</taxon>
        <taxon>Teleostei</taxon>
        <taxon>Ostariophysi</taxon>
        <taxon>Cypriniformes</taxon>
        <taxon>Danionidae</taxon>
        <taxon>Danioninae</taxon>
        <taxon>Danio</taxon>
    </lineage>
</organism>
<keyword id="KW-0025">Alternative splicing</keyword>
<keyword id="KW-0106">Calcium</keyword>
<keyword id="KW-0965">Cell junction</keyword>
<keyword id="KW-1003">Cell membrane</keyword>
<keyword id="KW-0217">Developmental protein</keyword>
<keyword id="KW-1015">Disulfide bond</keyword>
<keyword id="KW-0245">EGF-like domain</keyword>
<keyword id="KW-0325">Glycoprotein</keyword>
<keyword id="KW-0472">Membrane</keyword>
<keyword id="KW-1185">Reference proteome</keyword>
<keyword id="KW-0677">Repeat</keyword>
<keyword id="KW-0964">Secreted</keyword>
<keyword id="KW-0732">Signal</keyword>
<keyword id="KW-0812">Transmembrane</keyword>
<keyword id="KW-1133">Transmembrane helix</keyword>
<protein>
    <recommendedName>
        <fullName>Protein HEG</fullName>
    </recommendedName>
    <alternativeName>
        <fullName>Heart of glass</fullName>
    </alternativeName>
</protein>
<feature type="signal peptide" evidence="2">
    <location>
        <begin position="1"/>
        <end position="27"/>
    </location>
</feature>
<feature type="chain" id="PRO_0000286982" description="Protein HEG">
    <location>
        <begin position="28"/>
        <end position="977"/>
    </location>
</feature>
<feature type="transmembrane region" description="Helical" evidence="2">
    <location>
        <begin position="846"/>
        <end position="866"/>
    </location>
</feature>
<feature type="domain" description="EGF-like 1" evidence="3">
    <location>
        <begin position="587"/>
        <end position="624"/>
    </location>
</feature>
<feature type="domain" description="EGF-like 2; calcium-binding" evidence="3">
    <location>
        <begin position="626"/>
        <end position="665"/>
    </location>
</feature>
<feature type="region of interest" description="Disordered" evidence="4">
    <location>
        <begin position="85"/>
        <end position="153"/>
    </location>
</feature>
<feature type="region of interest" description="Disordered" evidence="4">
    <location>
        <begin position="200"/>
        <end position="391"/>
    </location>
</feature>
<feature type="region of interest" description="Disordered" evidence="4">
    <location>
        <begin position="404"/>
        <end position="445"/>
    </location>
</feature>
<feature type="region of interest" description="Disordered" evidence="4">
    <location>
        <begin position="499"/>
        <end position="586"/>
    </location>
</feature>
<feature type="compositionally biased region" description="Polar residues" evidence="4">
    <location>
        <begin position="93"/>
        <end position="110"/>
    </location>
</feature>
<feature type="compositionally biased region" description="Basic and acidic residues" evidence="4">
    <location>
        <begin position="112"/>
        <end position="122"/>
    </location>
</feature>
<feature type="compositionally biased region" description="Low complexity" evidence="4">
    <location>
        <begin position="132"/>
        <end position="144"/>
    </location>
</feature>
<feature type="compositionally biased region" description="Polar residues" evidence="4">
    <location>
        <begin position="200"/>
        <end position="212"/>
    </location>
</feature>
<feature type="compositionally biased region" description="Polar residues" evidence="4">
    <location>
        <begin position="244"/>
        <end position="296"/>
    </location>
</feature>
<feature type="compositionally biased region" description="Low complexity" evidence="4">
    <location>
        <begin position="311"/>
        <end position="323"/>
    </location>
</feature>
<feature type="compositionally biased region" description="Polar residues" evidence="4">
    <location>
        <begin position="325"/>
        <end position="366"/>
    </location>
</feature>
<feature type="compositionally biased region" description="Basic and acidic residues" evidence="4">
    <location>
        <begin position="367"/>
        <end position="384"/>
    </location>
</feature>
<feature type="compositionally biased region" description="Polar residues" evidence="4">
    <location>
        <begin position="404"/>
        <end position="435"/>
    </location>
</feature>
<feature type="compositionally biased region" description="Polar residues" evidence="4">
    <location>
        <begin position="499"/>
        <end position="538"/>
    </location>
</feature>
<feature type="compositionally biased region" description="Polar residues" evidence="4">
    <location>
        <begin position="545"/>
        <end position="563"/>
    </location>
</feature>
<feature type="compositionally biased region" description="Polar residues" evidence="4">
    <location>
        <begin position="570"/>
        <end position="586"/>
    </location>
</feature>
<feature type="glycosylation site" description="N-linked (GlcNAc...) asparagine" evidence="2">
    <location>
        <position position="125"/>
    </location>
</feature>
<feature type="glycosylation site" description="N-linked (GlcNAc...) asparagine" evidence="2">
    <location>
        <position position="192"/>
    </location>
</feature>
<feature type="glycosylation site" description="N-linked (GlcNAc...) asparagine" evidence="2">
    <location>
        <position position="200"/>
    </location>
</feature>
<feature type="glycosylation site" description="N-linked (GlcNAc...) asparagine" evidence="2">
    <location>
        <position position="246"/>
    </location>
</feature>
<feature type="glycosylation site" description="N-linked (GlcNAc...) asparagine" evidence="2">
    <location>
        <position position="333"/>
    </location>
</feature>
<feature type="glycosylation site" description="N-linked (GlcNAc...) asparagine" evidence="2">
    <location>
        <position position="343"/>
    </location>
</feature>
<feature type="glycosylation site" description="N-linked (GlcNAc...) asparagine" evidence="2">
    <location>
        <position position="535"/>
    </location>
</feature>
<feature type="glycosylation site" description="N-linked (GlcNAc...) asparagine" evidence="2">
    <location>
        <position position="677"/>
    </location>
</feature>
<feature type="glycosylation site" description="N-linked (GlcNAc...) asparagine" evidence="2">
    <location>
        <position position="699"/>
    </location>
</feature>
<feature type="glycosylation site" description="N-linked (GlcNAc...) asparagine" evidence="2">
    <location>
        <position position="734"/>
    </location>
</feature>
<feature type="glycosylation site" description="N-linked (GlcNAc...) asparagine" evidence="2">
    <location>
        <position position="750"/>
    </location>
</feature>
<feature type="disulfide bond" evidence="3">
    <location>
        <begin position="591"/>
        <end position="602"/>
    </location>
</feature>
<feature type="disulfide bond" evidence="3">
    <location>
        <begin position="596"/>
        <end position="612"/>
    </location>
</feature>
<feature type="disulfide bond" evidence="3">
    <location>
        <begin position="614"/>
        <end position="623"/>
    </location>
</feature>
<feature type="disulfide bond" evidence="3">
    <location>
        <begin position="630"/>
        <end position="641"/>
    </location>
</feature>
<feature type="disulfide bond" evidence="3">
    <location>
        <begin position="635"/>
        <end position="650"/>
    </location>
</feature>
<feature type="disulfide bond" evidence="3">
    <location>
        <begin position="652"/>
        <end position="664"/>
    </location>
</feature>
<feature type="splice variant" id="VSP_025277" description="In isoform 2." evidence="7">
    <location>
        <begin position="830"/>
        <end position="871"/>
    </location>
</feature>
<feature type="splice variant" id="VSP_025278" description="In isoform 3." evidence="7">
    <location>
        <begin position="842"/>
        <end position="977"/>
    </location>
</feature>
<gene>
    <name type="primary">heg</name>
</gene>
<accession>Q6R8J2</accession>
<accession>Q6R8J3</accession>
<accession>Q6R8J4</accession>
<dbReference type="EMBL" id="AY507658">
    <property type="protein sequence ID" value="AAR87662.1"/>
    <property type="molecule type" value="mRNA"/>
</dbReference>
<dbReference type="EMBL" id="AY507659">
    <property type="protein sequence ID" value="AAR87663.1"/>
    <property type="molecule type" value="mRNA"/>
</dbReference>
<dbReference type="EMBL" id="AY507660">
    <property type="protein sequence ID" value="AAR87664.1"/>
    <property type="molecule type" value="mRNA"/>
</dbReference>
<dbReference type="SMR" id="Q6R8J2"/>
<dbReference type="FunCoup" id="Q6R8J2">
    <property type="interactions" value="437"/>
</dbReference>
<dbReference type="STRING" id="7955.ENSDARP00000012786"/>
<dbReference type="GlyCosmos" id="Q6R8J2">
    <property type="glycosylation" value="11 sites, No reported glycans"/>
</dbReference>
<dbReference type="PaxDb" id="7955-ENSDARP00000012786"/>
<dbReference type="AGR" id="ZFIN:ZDB-GENE-040714-1"/>
<dbReference type="ZFIN" id="ZDB-GENE-040714-1">
    <property type="gene designation" value="heg1"/>
</dbReference>
<dbReference type="eggNOG" id="ENOG502QPW9">
    <property type="taxonomic scope" value="Eukaryota"/>
</dbReference>
<dbReference type="InParanoid" id="Q6R8J2"/>
<dbReference type="PhylomeDB" id="Q6R8J2"/>
<dbReference type="Reactome" id="R-DRE-5621480">
    <property type="pathway name" value="Dectin-2 family"/>
</dbReference>
<dbReference type="Reactome" id="R-DRE-913709">
    <property type="pathway name" value="O-linked glycosylation of mucins"/>
</dbReference>
<dbReference type="Reactome" id="R-DRE-9696264">
    <property type="pathway name" value="RND3 GTPase cycle"/>
</dbReference>
<dbReference type="Reactome" id="R-DRE-9696270">
    <property type="pathway name" value="RND2 GTPase cycle"/>
</dbReference>
<dbReference type="Reactome" id="R-DRE-9696273">
    <property type="pathway name" value="RND1 GTPase cycle"/>
</dbReference>
<dbReference type="Reactome" id="R-DRE-977068">
    <property type="pathway name" value="Termination of O-glycan biosynthesis"/>
</dbReference>
<dbReference type="PRO" id="PR:Q6R8J2"/>
<dbReference type="Proteomes" id="UP000000437">
    <property type="component" value="Unplaced"/>
</dbReference>
<dbReference type="GO" id="GO:0070161">
    <property type="term" value="C:anchoring junction"/>
    <property type="evidence" value="ECO:0007669"/>
    <property type="project" value="UniProtKB-SubCell"/>
</dbReference>
<dbReference type="GO" id="GO:0005576">
    <property type="term" value="C:extracellular region"/>
    <property type="evidence" value="ECO:0007669"/>
    <property type="project" value="UniProtKB-SubCell"/>
</dbReference>
<dbReference type="GO" id="GO:0005886">
    <property type="term" value="C:plasma membrane"/>
    <property type="evidence" value="ECO:0007669"/>
    <property type="project" value="UniProtKB-SubCell"/>
</dbReference>
<dbReference type="GO" id="GO:0005509">
    <property type="term" value="F:calcium ion binding"/>
    <property type="evidence" value="ECO:0007669"/>
    <property type="project" value="InterPro"/>
</dbReference>
<dbReference type="GO" id="GO:0007043">
    <property type="term" value="P:cell-cell junction assembly"/>
    <property type="evidence" value="ECO:0000315"/>
    <property type="project" value="ZFIN"/>
</dbReference>
<dbReference type="GO" id="GO:0007507">
    <property type="term" value="P:heart development"/>
    <property type="evidence" value="ECO:0000315"/>
    <property type="project" value="ZFIN"/>
</dbReference>
<dbReference type="CDD" id="cd00054">
    <property type="entry name" value="EGF_CA"/>
    <property type="match status" value="2"/>
</dbReference>
<dbReference type="Gene3D" id="2.10.25.10">
    <property type="entry name" value="Laminin"/>
    <property type="match status" value="2"/>
</dbReference>
<dbReference type="InterPro" id="IPR001881">
    <property type="entry name" value="EGF-like_Ca-bd_dom"/>
</dbReference>
<dbReference type="InterPro" id="IPR000742">
    <property type="entry name" value="EGF-like_dom"/>
</dbReference>
<dbReference type="InterPro" id="IPR000152">
    <property type="entry name" value="EGF-type_Asp/Asn_hydroxyl_site"/>
</dbReference>
<dbReference type="InterPro" id="IPR018097">
    <property type="entry name" value="EGF_Ca-bd_CS"/>
</dbReference>
<dbReference type="InterPro" id="IPR049883">
    <property type="entry name" value="NOTCH1_EGF-like"/>
</dbReference>
<dbReference type="PANTHER" id="PTHR24037">
    <property type="entry name" value="HEART DEVELOPMENT PROTEIN WITH EGF-LIKE DOMAINS 1"/>
    <property type="match status" value="1"/>
</dbReference>
<dbReference type="PANTHER" id="PTHR24037:SF3">
    <property type="entry name" value="PROTEIN HEG HOMOLOG 1"/>
    <property type="match status" value="1"/>
</dbReference>
<dbReference type="Pfam" id="PF07645">
    <property type="entry name" value="EGF_CA"/>
    <property type="match status" value="1"/>
</dbReference>
<dbReference type="SMART" id="SM00181">
    <property type="entry name" value="EGF"/>
    <property type="match status" value="3"/>
</dbReference>
<dbReference type="SMART" id="SM00179">
    <property type="entry name" value="EGF_CA"/>
    <property type="match status" value="2"/>
</dbReference>
<dbReference type="SUPFAM" id="SSF57196">
    <property type="entry name" value="EGF/Laminin"/>
    <property type="match status" value="2"/>
</dbReference>
<dbReference type="PROSITE" id="PS00010">
    <property type="entry name" value="ASX_HYDROXYL"/>
    <property type="match status" value="1"/>
</dbReference>
<dbReference type="PROSITE" id="PS00022">
    <property type="entry name" value="EGF_1"/>
    <property type="match status" value="1"/>
</dbReference>
<dbReference type="PROSITE" id="PS01186">
    <property type="entry name" value="EGF_2"/>
    <property type="match status" value="1"/>
</dbReference>
<dbReference type="PROSITE" id="PS50026">
    <property type="entry name" value="EGF_3"/>
    <property type="match status" value="2"/>
</dbReference>
<dbReference type="PROSITE" id="PS01187">
    <property type="entry name" value="EGF_CA"/>
    <property type="match status" value="1"/>
</dbReference>
<comment type="function">
    <text evidence="5 6">Receptor component of the CCM signaling pathway which is a crucial regulator of heart and vessel formation and integrity. May act through the stabilization of endothelial cell junctions.</text>
</comment>
<comment type="subunit">
    <text evidence="6">Interacts with CCM2 and KRIT1; KRIT1 markedly facilitates interaction with CCM2.</text>
</comment>
<comment type="subcellular location">
    <molecule>Isoform 1</molecule>
    <subcellularLocation>
        <location evidence="8">Cell membrane</location>
        <topology evidence="8">Single-pass type I membrane protein</topology>
    </subcellularLocation>
    <subcellularLocation>
        <location evidence="1">Cell junction</location>
    </subcellularLocation>
</comment>
<comment type="subcellular location">
    <molecule>Isoform 2</molecule>
    <subcellularLocation>
        <location evidence="8">Secreted</location>
    </subcellularLocation>
</comment>
<comment type="subcellular location">
    <molecule>Isoform 3</molecule>
    <subcellularLocation>
        <location evidence="8">Secreted</location>
    </subcellularLocation>
</comment>
<comment type="alternative products">
    <event type="alternative splicing"/>
    <isoform>
        <id>Q6R8J2-1</id>
        <name>1</name>
        <sequence type="displayed"/>
    </isoform>
    <isoform>
        <id>Q6R8J2-2</id>
        <name>2</name>
        <sequence type="described" ref="VSP_025277"/>
    </isoform>
    <isoform>
        <id>Q6R8J2-3</id>
        <name>3</name>
        <sequence type="described" ref="VSP_025278"/>
    </isoform>
</comment>
<comment type="developmental stage">
    <text evidence="5">Expressed in the endocardium of developing heart.</text>
</comment>
<comment type="disruption phenotype">
    <text evidence="5">Death at embryonic stages due to heart growth defects.</text>
</comment>
<comment type="miscellaneous">
    <molecule>Isoform 3</molecule>
    <text evidence="8">May be produced at very low levels due to a premature stop codon in the mRNA, leading to nonsense-mediated mRNA decay.</text>
</comment>
<sequence>MMETCARRVLFTAALLVLSTVIAETFSTDSDTDNPLSTETFYSRASGLKQTSSWPGREATATAVDLSSGLGEMTEIPASVSITAAREGHSPKPLQTSTNAADWKTSTTSDETTEHLQSDTELTHNATAQWESPSSASHSITSHHPVTETRTVRDVTDLIDMDTTDSVSHTDSTYISTTNRVGERTLLSVISNSTFAYTQNSSISDAESQTSPWEEKTSGATQVNEETEETVSTVSEQTDPTFEGRNTTSATLETERSTLSQGTESQTGQPSVTGQTAKEVTDIDNPNSTPPLTVTSRDVEETDATSVSSETSYTQTSSDSASSILPFTSSEHNVTSTSQESHNSTLIYSTNTGGSTEFSTGSVSSTAHEETERSSTRIVDETTLHDVTSAPPVLEDVATTIDDSLSKFPSGQSPTIPKTDDQTNTQVVPTSTHRPQVTDEATDEVSTVYSSTTTLTTTTPSVTTRQLQPHYTTVQTQTQHTTIVTTDIIQVLRTTPSTAHHVPTLTTSGPQAPSTADSSDVTTLHLETSTATPGNTTAHGGRATTPFSKSSPGRTTVVVTTGHLTDKSTTETGSATTQMPLRTSASPGHVCGPKTCANGGHCVRSAEGSYYCQCLSAWTGPFCTEDVDECVNSPCPQGSVCVNTGGSFSCECDLGFDLEDGRSCTQVKTFLGTFTVNNSLHLRNLGLHELHREIQQLLNASLSIFHGYRRFTLGKRDGQGVQIPVVSMFSLSSNVTSADVFNSIQMSLNNCSRTYSHCPIKLQHQLSYHVESLCMAQKTKCDVQYSDCSDISGIPNCQCLPGYFKRNPEDMTCRDCGDGLKLVNGKCVECMFGFGGFNCNNFYKLIAVVVSPAGGALLLIVVIALIVTCCKKDKNDINKIIFKSGELQMSPYAEFPKSNRVSMEWGRETIEMQENGSTKNLLQMTDIYYSPALRNSDLERNGLYPFSGLPGSRHSCIYPAQWNPSFLSDDSRRRDYF</sequence>
<proteinExistence type="evidence at protein level"/>